<comment type="function">
    <text evidence="2">Catalyzes the conversion of ribonucleotides into deoxyribonucleotides, which are required for DNA synthesis and repair.</text>
</comment>
<comment type="catalytic activity">
    <reaction evidence="2">
        <text>a ribonucleoside 5'-triphosphate + formate + H(+) = a 2'-deoxyribonucleoside 5'-triphosphate + CO2 + H2O</text>
        <dbReference type="Rhea" id="RHEA:51476"/>
        <dbReference type="ChEBI" id="CHEBI:15377"/>
        <dbReference type="ChEBI" id="CHEBI:15378"/>
        <dbReference type="ChEBI" id="CHEBI:15740"/>
        <dbReference type="ChEBI" id="CHEBI:16526"/>
        <dbReference type="ChEBI" id="CHEBI:61557"/>
        <dbReference type="ChEBI" id="CHEBI:61560"/>
        <dbReference type="EC" id="1.1.98.6"/>
    </reaction>
</comment>
<comment type="activity regulation">
    <text evidence="2">Activated under anaerobic conditions by NrdG, a tightly associated activase. Activation involves the formation of a glycyl radical at Gly-681.</text>
</comment>
<comment type="subunit">
    <text evidence="2">Forms a tetramer composed of two NrdD and two NrdG subunits.</text>
</comment>
<comment type="similarity">
    <text evidence="5">Belongs to the anaerobic ribonucleoside-triphosphate reductase family.</text>
</comment>
<name>NRDD_SALTY</name>
<accession>Q9L646</accession>
<keyword id="KW-0067">ATP-binding</keyword>
<keyword id="KW-0479">Metal-binding</keyword>
<keyword id="KW-0547">Nucleotide-binding</keyword>
<keyword id="KW-0556">Organic radical</keyword>
<keyword id="KW-0560">Oxidoreductase</keyword>
<keyword id="KW-1185">Reference proteome</keyword>
<keyword id="KW-0862">Zinc</keyword>
<gene>
    <name type="primary">nrdD</name>
    <name type="ordered locus">STM4452</name>
</gene>
<evidence type="ECO:0000250" key="1">
    <source>
        <dbReference type="UniProtKB" id="P07071"/>
    </source>
</evidence>
<evidence type="ECO:0000250" key="2">
    <source>
        <dbReference type="UniProtKB" id="P28903"/>
    </source>
</evidence>
<evidence type="ECO:0000255" key="3">
    <source>
        <dbReference type="PROSITE-ProRule" id="PRU00492"/>
    </source>
</evidence>
<evidence type="ECO:0000255" key="4">
    <source>
        <dbReference type="PROSITE-ProRule" id="PRU00493"/>
    </source>
</evidence>
<evidence type="ECO:0000305" key="5"/>
<proteinExistence type="inferred from homology"/>
<organism>
    <name type="scientific">Salmonella typhimurium (strain LT2 / SGSC1412 / ATCC 700720)</name>
    <dbReference type="NCBI Taxonomy" id="99287"/>
    <lineage>
        <taxon>Bacteria</taxon>
        <taxon>Pseudomonadati</taxon>
        <taxon>Pseudomonadota</taxon>
        <taxon>Gammaproteobacteria</taxon>
        <taxon>Enterobacterales</taxon>
        <taxon>Enterobacteriaceae</taxon>
        <taxon>Salmonella</taxon>
    </lineage>
</organism>
<dbReference type="EC" id="1.1.98.6" evidence="2"/>
<dbReference type="EMBL" id="AF242390">
    <property type="protein sequence ID" value="AAF60351.1"/>
    <property type="molecule type" value="Genomic_DNA"/>
</dbReference>
<dbReference type="EMBL" id="AE006468">
    <property type="protein sequence ID" value="AAL23272.1"/>
    <property type="molecule type" value="Genomic_DNA"/>
</dbReference>
<dbReference type="RefSeq" id="NP_463313.1">
    <property type="nucleotide sequence ID" value="NC_003197.2"/>
</dbReference>
<dbReference type="RefSeq" id="WP_000187818.1">
    <property type="nucleotide sequence ID" value="NC_003197.2"/>
</dbReference>
<dbReference type="SMR" id="Q9L646"/>
<dbReference type="STRING" id="99287.STM4452"/>
<dbReference type="PaxDb" id="99287-STM4452"/>
<dbReference type="GeneID" id="1255978"/>
<dbReference type="KEGG" id="stm:STM4452"/>
<dbReference type="PATRIC" id="fig|99287.12.peg.4682"/>
<dbReference type="HOGENOM" id="CLU_002707_2_0_6"/>
<dbReference type="OMA" id="HDLDYTP"/>
<dbReference type="PhylomeDB" id="Q9L646"/>
<dbReference type="BioCyc" id="SENT99287:STM4452-MONOMER"/>
<dbReference type="Proteomes" id="UP000001014">
    <property type="component" value="Chromosome"/>
</dbReference>
<dbReference type="GO" id="GO:0031250">
    <property type="term" value="C:anaerobic ribonucleoside-triphosphate reductase complex"/>
    <property type="evidence" value="ECO:0000318"/>
    <property type="project" value="GO_Central"/>
</dbReference>
<dbReference type="GO" id="GO:0005524">
    <property type="term" value="F:ATP binding"/>
    <property type="evidence" value="ECO:0007669"/>
    <property type="project" value="UniProtKB-KW"/>
</dbReference>
<dbReference type="GO" id="GO:0046872">
    <property type="term" value="F:metal ion binding"/>
    <property type="evidence" value="ECO:0007669"/>
    <property type="project" value="UniProtKB-KW"/>
</dbReference>
<dbReference type="GO" id="GO:0008998">
    <property type="term" value="F:ribonucleoside-triphosphate reductase (thioredoxin) activity"/>
    <property type="evidence" value="ECO:0000318"/>
    <property type="project" value="GO_Central"/>
</dbReference>
<dbReference type="GO" id="GO:0009265">
    <property type="term" value="P:2'-deoxyribonucleotide biosynthetic process"/>
    <property type="evidence" value="ECO:0000318"/>
    <property type="project" value="GO_Central"/>
</dbReference>
<dbReference type="GO" id="GO:0006260">
    <property type="term" value="P:DNA replication"/>
    <property type="evidence" value="ECO:0007669"/>
    <property type="project" value="InterPro"/>
</dbReference>
<dbReference type="CDD" id="cd01675">
    <property type="entry name" value="RNR_III"/>
    <property type="match status" value="1"/>
</dbReference>
<dbReference type="FunFam" id="3.20.70.20:FF:000006">
    <property type="entry name" value="Anaerobic ribonucleoside-triphosphate reductase NrdD"/>
    <property type="match status" value="1"/>
</dbReference>
<dbReference type="Gene3D" id="3.20.70.20">
    <property type="match status" value="1"/>
</dbReference>
<dbReference type="InterPro" id="IPR005144">
    <property type="entry name" value="ATP-cone_dom"/>
</dbReference>
<dbReference type="InterPro" id="IPR019777">
    <property type="entry name" value="Form_AcTrfase_GR_CS"/>
</dbReference>
<dbReference type="InterPro" id="IPR001150">
    <property type="entry name" value="Gly_radical"/>
</dbReference>
<dbReference type="InterPro" id="IPR012833">
    <property type="entry name" value="NrdD"/>
</dbReference>
<dbReference type="NCBIfam" id="TIGR02487">
    <property type="entry name" value="NrdD"/>
    <property type="match status" value="1"/>
</dbReference>
<dbReference type="NCBIfam" id="NF006732">
    <property type="entry name" value="PRK09263.1"/>
    <property type="match status" value="1"/>
</dbReference>
<dbReference type="PANTHER" id="PTHR21075">
    <property type="entry name" value="ANAEROBIC RIBONUCLEOSIDE-TRIPHOSPHATE REDUCTASE"/>
    <property type="match status" value="1"/>
</dbReference>
<dbReference type="PANTHER" id="PTHR21075:SF0">
    <property type="entry name" value="ANAEROBIC RIBONUCLEOSIDE-TRIPHOSPHATE REDUCTASE"/>
    <property type="match status" value="1"/>
</dbReference>
<dbReference type="Pfam" id="PF03477">
    <property type="entry name" value="ATP-cone"/>
    <property type="match status" value="1"/>
</dbReference>
<dbReference type="Pfam" id="PF13597">
    <property type="entry name" value="NRDD"/>
    <property type="match status" value="1"/>
</dbReference>
<dbReference type="SUPFAM" id="SSF51998">
    <property type="entry name" value="PFL-like glycyl radical enzymes"/>
    <property type="match status" value="1"/>
</dbReference>
<dbReference type="PROSITE" id="PS51161">
    <property type="entry name" value="ATP_CONE"/>
    <property type="match status" value="1"/>
</dbReference>
<dbReference type="PROSITE" id="PS00850">
    <property type="entry name" value="GLY_RADICAL_1"/>
    <property type="match status" value="1"/>
</dbReference>
<dbReference type="PROSITE" id="PS51149">
    <property type="entry name" value="GLY_RADICAL_2"/>
    <property type="match status" value="1"/>
</dbReference>
<protein>
    <recommendedName>
        <fullName evidence="2">Anaerobic ribonucleoside-triphosphate reductase</fullName>
        <ecNumber evidence="2">1.1.98.6</ecNumber>
    </recommendedName>
    <alternativeName>
        <fullName evidence="2">Class III ribonucleoside-triphosphate reductase</fullName>
    </alternativeName>
</protein>
<feature type="chain" id="PRO_0000166685" description="Anaerobic ribonucleoside-triphosphate reductase">
    <location>
        <begin position="1"/>
        <end position="712"/>
    </location>
</feature>
<feature type="domain" description="ATP-cone" evidence="3">
    <location>
        <begin position="3"/>
        <end position="92"/>
    </location>
</feature>
<feature type="domain" description="Glycine radical" evidence="4">
    <location>
        <begin position="583"/>
        <end position="708"/>
    </location>
</feature>
<feature type="binding site" evidence="1">
    <location>
        <position position="644"/>
    </location>
    <ligand>
        <name>Zn(2+)</name>
        <dbReference type="ChEBI" id="CHEBI:29105"/>
    </ligand>
</feature>
<feature type="binding site" evidence="1">
    <location>
        <position position="647"/>
    </location>
    <ligand>
        <name>Zn(2+)</name>
        <dbReference type="ChEBI" id="CHEBI:29105"/>
    </ligand>
</feature>
<feature type="binding site" evidence="1">
    <location>
        <position position="662"/>
    </location>
    <ligand>
        <name>Zn(2+)</name>
        <dbReference type="ChEBI" id="CHEBI:29105"/>
    </ligand>
</feature>
<feature type="binding site" evidence="1">
    <location>
        <position position="665"/>
    </location>
    <ligand>
        <name>Zn(2+)</name>
        <dbReference type="ChEBI" id="CHEBI:29105"/>
    </ligand>
</feature>
<feature type="modified residue" description="Glycine radical" evidence="4">
    <location>
        <position position="681"/>
    </location>
</feature>
<reference key="1">
    <citation type="submission" date="2000-03" db="EMBL/GenBank/DDBJ databases">
        <title>Genetic regulation and mutant characterization of anaerobic ribonucleotide reductase in Salmonella typhimurium.</title>
        <authorList>
            <person name="Ng W."/>
            <person name="Wong K."/>
            <person name="Kwan H."/>
        </authorList>
    </citation>
    <scope>NUCLEOTIDE SEQUENCE [GENOMIC DNA]</scope>
</reference>
<reference key="2">
    <citation type="journal article" date="2001" name="Nature">
        <title>Complete genome sequence of Salmonella enterica serovar Typhimurium LT2.</title>
        <authorList>
            <person name="McClelland M."/>
            <person name="Sanderson K.E."/>
            <person name="Spieth J."/>
            <person name="Clifton S.W."/>
            <person name="Latreille P."/>
            <person name="Courtney L."/>
            <person name="Porwollik S."/>
            <person name="Ali J."/>
            <person name="Dante M."/>
            <person name="Du F."/>
            <person name="Hou S."/>
            <person name="Layman D."/>
            <person name="Leonard S."/>
            <person name="Nguyen C."/>
            <person name="Scott K."/>
            <person name="Holmes A."/>
            <person name="Grewal N."/>
            <person name="Mulvaney E."/>
            <person name="Ryan E."/>
            <person name="Sun H."/>
            <person name="Florea L."/>
            <person name="Miller W."/>
            <person name="Stoneking T."/>
            <person name="Nhan M."/>
            <person name="Waterston R."/>
            <person name="Wilson R.K."/>
        </authorList>
    </citation>
    <scope>NUCLEOTIDE SEQUENCE [LARGE SCALE GENOMIC DNA]</scope>
    <source>
        <strain>LT2 / SGSC1412 / ATCC 700720</strain>
    </source>
</reference>
<sequence>MTPHVMKRDGCKVPFKSERIKEAILRAAKAAGVDDADYCATVAEVVSSQMNARSQVDINEIQTAVENQLMSGPYKQLARAYIEYRHDRDIQREKRGRLNQEIRGLVEQTNSALLNENANKDSKVIPTQRDLLAGIVAKHYARQHLLPRDVVQAHERGDIHYHDLDYSPFFPMFNCMLIDLKGMLTQGFKMGNAEIEPPKSISTATAVTAQIIAQVASHIYGGTTINRIDEVLAPFVTESYNKHRKTADEWQIPDAEGYARSRTEKECYDAFQSLEYEVNTLHTANGQTPFVTFGFGLGTSWESRLIQASILRNRIAGLGKNRKTAVFPKLVFAIRDGLNHKFGDPNYDIKQLALECASKRMYPDILNYDQVVKVTGSFKTPMGCRSFLGVWENENGEQIHDGRNNLGVISLNLPRIALEAKGDETAFWKLLDERLALARKALMTRIARLEGVKARVAPILYMEGACGVRLKADDDVSEIFKNGRASISLGYIGIHETINALFGGEHLYDSEQLRAKGIAIVERLRQAVDQWKDETGYGFSLYSTPSENLCDRFCRLDTAEFGVVPGVTDKGYYTNSFHLDVEKKVNPYDKIDFEAPYPPLANGGFICYGEYPNIQHNLKALEDVWDYSYQHVPYYGTNTPIDECYECGFTGEFECTSKGFTCPKCGNHDAARVSVTRRVCGYLGSPDARPFNAGKQEEVKRRVKHLGNGQIG</sequence>